<accession>Q02398</accession>
<accession>C8VCP5</accession>
<accession>Q00178</accession>
<accession>Q00183</accession>
<accession>Q5AWM1</accession>
<sequence>MEPTFDIPDSTDWLDTPLTLLAPFETSLRCQVCKDFFDNPVITSCSHTFCSLCIRRCLSTEGKCPTCRSSDQELKLRRNWVVQELVEGFKNARPSILQLARMAQTGTDDSGDLAAEEPASKKRKIEPNAIVGTDGLPEEGIRTRSQSRGASRQPQATPVQVIDDGNDEDYMPDGLVPCPVCGRRMKEEAVFRHLDSCTGTAEELKPAAFGSLAPGPRKSFLAATGKPPERLPVINYSLLKDTVLRKKLKDLGIPNWGPRALLQRRHTEWLNLWNANCDSRTPKPKRELLRELDVWERTQGGNSVTPTDPTNAVMNKDFNTEEWSANYDTDFKALIANARKKNDAVIRSTIPNASQANSDTPRSAQLVDQPIEASLTPQDVDEKSTMNPQDAIDNRTEVPPVPDPPQALSGIDRAVNSPMKNVTEGDAQAIPISSSASTHKTPH</sequence>
<organism>
    <name type="scientific">Emericella nidulans (strain FGSC A4 / ATCC 38163 / CBS 112.46 / NRRL 194 / M139)</name>
    <name type="common">Aspergillus nidulans</name>
    <dbReference type="NCBI Taxonomy" id="227321"/>
    <lineage>
        <taxon>Eukaryota</taxon>
        <taxon>Fungi</taxon>
        <taxon>Dikarya</taxon>
        <taxon>Ascomycota</taxon>
        <taxon>Pezizomycotina</taxon>
        <taxon>Eurotiomycetes</taxon>
        <taxon>Eurotiomycetidae</taxon>
        <taxon>Eurotiales</taxon>
        <taxon>Aspergillaceae</taxon>
        <taxon>Aspergillus</taxon>
        <taxon>Aspergillus subgen. Nidulantes</taxon>
    </lineage>
</organism>
<comment type="function">
    <text evidence="1">E3 RING-finger protein, member of the UBC2/RAD6 epistasis group. Associates to the E2 ubiquitin conjugating enzyme UBC2/RAD6 to form the UBC2-RAD18 ubiquitin ligase complex involved in postreplicative repair (PRR) of damaged DNA.</text>
</comment>
<comment type="catalytic activity">
    <reaction>
        <text>S-ubiquitinyl-[E2 ubiquitin-conjugating enzyme]-L-cysteine + [acceptor protein]-L-lysine = [E2 ubiquitin-conjugating enzyme]-L-cysteine + N(6)-ubiquitinyl-[acceptor protein]-L-lysine.</text>
        <dbReference type="EC" id="2.3.2.27"/>
    </reaction>
</comment>
<comment type="pathway">
    <text>Protein modification; protein ubiquitination.</text>
</comment>
<comment type="subunit">
    <text evidence="1">Interacts with E2 UBC2, forming a complex with ubiquitin ligase activity.</text>
</comment>
<comment type="subcellular location">
    <subcellularLocation>
        <location evidence="1">Nucleus</location>
    </subcellularLocation>
</comment>
<comment type="similarity">
    <text evidence="6">Belongs to the RAD18 family.</text>
</comment>
<comment type="sequence caution" evidence="6">
    <conflict type="erroneous gene model prediction">
        <sequence resource="EMBL-CDS" id="AAB35098"/>
    </conflict>
</comment>
<comment type="sequence caution" evidence="6">
    <conflict type="erroneous gene model prediction">
        <sequence resource="EMBL-CDS" id="CAA90033"/>
    </conflict>
</comment>
<comment type="sequence caution" evidence="6">
    <conflict type="erroneous gene model prediction">
        <sequence resource="EMBL-CDS" id="EAA61360"/>
    </conflict>
</comment>
<feature type="chain" id="PRO_0000056156" description="Postreplication repair E3 ubiquitin-protein ligase rad18">
    <location>
        <begin position="1"/>
        <end position="443"/>
    </location>
</feature>
<feature type="domain" description="SAP" evidence="3">
    <location>
        <begin position="239"/>
        <end position="273"/>
    </location>
</feature>
<feature type="zinc finger region" description="RING-type" evidence="2">
    <location>
        <begin position="30"/>
        <end position="68"/>
    </location>
</feature>
<feature type="zinc finger region" description="UBZ4-type" evidence="4">
    <location>
        <begin position="175"/>
        <end position="202"/>
    </location>
</feature>
<feature type="region of interest" description="Disordered" evidence="5">
    <location>
        <begin position="106"/>
        <end position="157"/>
    </location>
</feature>
<feature type="region of interest" description="Disordered" evidence="5">
    <location>
        <begin position="350"/>
        <end position="443"/>
    </location>
</feature>
<feature type="compositionally biased region" description="Polar residues" evidence="5">
    <location>
        <begin position="143"/>
        <end position="157"/>
    </location>
</feature>
<feature type="compositionally biased region" description="Polar residues" evidence="5">
    <location>
        <begin position="350"/>
        <end position="363"/>
    </location>
</feature>
<feature type="compositionally biased region" description="Polar residues" evidence="5">
    <location>
        <begin position="431"/>
        <end position="443"/>
    </location>
</feature>
<feature type="binding site" evidence="4">
    <location>
        <position position="178"/>
    </location>
    <ligand>
        <name>Zn(2+)</name>
        <dbReference type="ChEBI" id="CHEBI:29105"/>
    </ligand>
</feature>
<feature type="binding site" evidence="4">
    <location>
        <position position="181"/>
    </location>
    <ligand>
        <name>Zn(2+)</name>
        <dbReference type="ChEBI" id="CHEBI:29105"/>
    </ligand>
</feature>
<feature type="binding site" evidence="4">
    <location>
        <position position="193"/>
    </location>
    <ligand>
        <name>Zn(2+)</name>
        <dbReference type="ChEBI" id="CHEBI:29105"/>
    </ligand>
</feature>
<feature type="binding site" evidence="4">
    <location>
        <position position="197"/>
    </location>
    <ligand>
        <name>Zn(2+)</name>
        <dbReference type="ChEBI" id="CHEBI:29105"/>
    </ligand>
</feature>
<feature type="sequence conflict" description="In Ref. 2; CAA90033." evidence="6" ref="2">
    <original>FG</original>
    <variation>YR</variation>
    <location>
        <begin position="209"/>
        <end position="210"/>
    </location>
</feature>
<name>RAD18_EMENI</name>
<reference key="1">
    <citation type="journal article" date="1995" name="Mol. Gen. Genet.">
        <title>The Aspergillus uvsH gene encodes a product homologous to yeast RAD18 and Neurospora UVS-2.</title>
        <authorList>
            <person name="Yoon J.H."/>
            <person name="Lee B.J."/>
            <person name="Kang H.S."/>
        </authorList>
    </citation>
    <scope>NUCLEOTIDE SEQUENCE [GENOMIC DNA]</scope>
    <source>
        <strain>FGSC A4 / ATCC 38163 / CBS 112.46 / NRRL 194 / M139</strain>
    </source>
</reference>
<reference key="2">
    <citation type="journal article" date="1996" name="Microbiology">
        <title>nuvA, an Aspergillus nidulans gene involved in DNA repair and recombination, is a homologue of Saccharomyces cerevisiae RAD18 and Neurospora crassa uvs-2.</title>
        <authorList>
            <person name="Iwanejko L.A."/>
            <person name="Cotton C.M."/>
            <person name="Jones G.W."/>
            <person name="Tomsett A.B."/>
            <person name="Strike P."/>
        </authorList>
    </citation>
    <scope>NUCLEOTIDE SEQUENCE [GENOMIC DNA / MRNA]</scope>
    <source>
        <strain>L20</strain>
    </source>
</reference>
<reference key="3">
    <citation type="journal article" date="2005" name="Nature">
        <title>Sequencing of Aspergillus nidulans and comparative analysis with A. fumigatus and A. oryzae.</title>
        <authorList>
            <person name="Galagan J.E."/>
            <person name="Calvo S.E."/>
            <person name="Cuomo C."/>
            <person name="Ma L.-J."/>
            <person name="Wortman J.R."/>
            <person name="Batzoglou S."/>
            <person name="Lee S.-I."/>
            <person name="Bastuerkmen M."/>
            <person name="Spevak C.C."/>
            <person name="Clutterbuck J."/>
            <person name="Kapitonov V."/>
            <person name="Jurka J."/>
            <person name="Scazzocchio C."/>
            <person name="Farman M.L."/>
            <person name="Butler J."/>
            <person name="Purcell S."/>
            <person name="Harris S."/>
            <person name="Braus G.H."/>
            <person name="Draht O."/>
            <person name="Busch S."/>
            <person name="D'Enfert C."/>
            <person name="Bouchier C."/>
            <person name="Goldman G.H."/>
            <person name="Bell-Pedersen D."/>
            <person name="Griffiths-Jones S."/>
            <person name="Doonan J.H."/>
            <person name="Yu J."/>
            <person name="Vienken K."/>
            <person name="Pain A."/>
            <person name="Freitag M."/>
            <person name="Selker E.U."/>
            <person name="Archer D.B."/>
            <person name="Penalva M.A."/>
            <person name="Oakley B.R."/>
            <person name="Momany M."/>
            <person name="Tanaka T."/>
            <person name="Kumagai T."/>
            <person name="Asai K."/>
            <person name="Machida M."/>
            <person name="Nierman W.C."/>
            <person name="Denning D.W."/>
            <person name="Caddick M.X."/>
            <person name="Hynes M."/>
            <person name="Paoletti M."/>
            <person name="Fischer R."/>
            <person name="Miller B.L."/>
            <person name="Dyer P.S."/>
            <person name="Sachs M.S."/>
            <person name="Osmani S.A."/>
            <person name="Birren B.W."/>
        </authorList>
    </citation>
    <scope>NUCLEOTIDE SEQUENCE [LARGE SCALE GENOMIC DNA]</scope>
    <source>
        <strain>FGSC A4 / ATCC 38163 / CBS 112.46 / NRRL 194 / M139</strain>
    </source>
</reference>
<reference key="4">
    <citation type="journal article" date="2009" name="Fungal Genet. Biol.">
        <title>The 2008 update of the Aspergillus nidulans genome annotation: a community effort.</title>
        <authorList>
            <person name="Wortman J.R."/>
            <person name="Gilsenan J.M."/>
            <person name="Joardar V."/>
            <person name="Deegan J."/>
            <person name="Clutterbuck J."/>
            <person name="Andersen M.R."/>
            <person name="Archer D."/>
            <person name="Bencina M."/>
            <person name="Braus G."/>
            <person name="Coutinho P."/>
            <person name="von Dohren H."/>
            <person name="Doonan J."/>
            <person name="Driessen A.J."/>
            <person name="Durek P."/>
            <person name="Espeso E."/>
            <person name="Fekete E."/>
            <person name="Flipphi M."/>
            <person name="Estrada C.G."/>
            <person name="Geysens S."/>
            <person name="Goldman G."/>
            <person name="de Groot P.W."/>
            <person name="Hansen K."/>
            <person name="Harris S.D."/>
            <person name="Heinekamp T."/>
            <person name="Helmstaedt K."/>
            <person name="Henrissat B."/>
            <person name="Hofmann G."/>
            <person name="Homan T."/>
            <person name="Horio T."/>
            <person name="Horiuchi H."/>
            <person name="James S."/>
            <person name="Jones M."/>
            <person name="Karaffa L."/>
            <person name="Karanyi Z."/>
            <person name="Kato M."/>
            <person name="Keller N."/>
            <person name="Kelly D.E."/>
            <person name="Kiel J.A."/>
            <person name="Kim J.M."/>
            <person name="van der Klei I.J."/>
            <person name="Klis F.M."/>
            <person name="Kovalchuk A."/>
            <person name="Krasevec N."/>
            <person name="Kubicek C.P."/>
            <person name="Liu B."/>
            <person name="Maccabe A."/>
            <person name="Meyer V."/>
            <person name="Mirabito P."/>
            <person name="Miskei M."/>
            <person name="Mos M."/>
            <person name="Mullins J."/>
            <person name="Nelson D.R."/>
            <person name="Nielsen J."/>
            <person name="Oakley B.R."/>
            <person name="Osmani S.A."/>
            <person name="Pakula T."/>
            <person name="Paszewski A."/>
            <person name="Paulsen I."/>
            <person name="Pilsyk S."/>
            <person name="Pocsi I."/>
            <person name="Punt P.J."/>
            <person name="Ram A.F."/>
            <person name="Ren Q."/>
            <person name="Robellet X."/>
            <person name="Robson G."/>
            <person name="Seiboth B."/>
            <person name="van Solingen P."/>
            <person name="Specht T."/>
            <person name="Sun J."/>
            <person name="Taheri-Talesh N."/>
            <person name="Takeshita N."/>
            <person name="Ussery D."/>
            <person name="vanKuyk P.A."/>
            <person name="Visser H."/>
            <person name="van de Vondervoort P.J."/>
            <person name="de Vries R.P."/>
            <person name="Walton J."/>
            <person name="Xiang X."/>
            <person name="Xiong Y."/>
            <person name="Zeng A.P."/>
            <person name="Brandt B.W."/>
            <person name="Cornell M.J."/>
            <person name="van den Hondel C.A."/>
            <person name="Visser J."/>
            <person name="Oliver S.G."/>
            <person name="Turner G."/>
        </authorList>
    </citation>
    <scope>GENOME REANNOTATION</scope>
    <source>
        <strain>FGSC A4 / ATCC 38163 / CBS 112.46 / NRRL 194 / M139</strain>
    </source>
</reference>
<protein>
    <recommendedName>
        <fullName>Postreplication repair E3 ubiquitin-protein ligase rad18</fullName>
        <ecNumber>2.3.2.27</ecNumber>
    </recommendedName>
    <alternativeName>
        <fullName evidence="6">RING-type E3 ubiquitin transferase rad18</fullName>
    </alternativeName>
</protein>
<gene>
    <name type="primary">uvsH</name>
    <name type="synonym">nuvA</name>
    <name type="synonym">rad18</name>
    <name type="ORF">AN7309</name>
</gene>
<keyword id="KW-0227">DNA damage</keyword>
<keyword id="KW-0234">DNA repair</keyword>
<keyword id="KW-0238">DNA-binding</keyword>
<keyword id="KW-0479">Metal-binding</keyword>
<keyword id="KW-0539">Nucleus</keyword>
<keyword id="KW-1185">Reference proteome</keyword>
<keyword id="KW-0808">Transferase</keyword>
<keyword id="KW-0833">Ubl conjugation pathway</keyword>
<keyword id="KW-0862">Zinc</keyword>
<keyword id="KW-0863">Zinc-finger</keyword>
<evidence type="ECO:0000250" key="1"/>
<evidence type="ECO:0000255" key="2">
    <source>
        <dbReference type="PROSITE-ProRule" id="PRU00175"/>
    </source>
</evidence>
<evidence type="ECO:0000255" key="3">
    <source>
        <dbReference type="PROSITE-ProRule" id="PRU00186"/>
    </source>
</evidence>
<evidence type="ECO:0000255" key="4">
    <source>
        <dbReference type="PROSITE-ProRule" id="PRU01256"/>
    </source>
</evidence>
<evidence type="ECO:0000256" key="5">
    <source>
        <dbReference type="SAM" id="MobiDB-lite"/>
    </source>
</evidence>
<evidence type="ECO:0000305" key="6"/>
<proteinExistence type="evidence at transcript level"/>
<dbReference type="EC" id="2.3.2.27"/>
<dbReference type="EMBL" id="S79392">
    <property type="protein sequence ID" value="AAB35098.1"/>
    <property type="status" value="ALT_SEQ"/>
    <property type="molecule type" value="Genomic_DNA"/>
</dbReference>
<dbReference type="EMBL" id="Z49875">
    <property type="protein sequence ID" value="CAA90033.1"/>
    <property type="status" value="ALT_SEQ"/>
    <property type="molecule type" value="Genomic_DNA"/>
</dbReference>
<dbReference type="EMBL" id="Z49834">
    <property type="protein sequence ID" value="CAA89995.1"/>
    <property type="molecule type" value="mRNA"/>
</dbReference>
<dbReference type="EMBL" id="AACD01000127">
    <property type="protein sequence ID" value="EAA61360.1"/>
    <property type="status" value="ALT_SEQ"/>
    <property type="molecule type" value="Genomic_DNA"/>
</dbReference>
<dbReference type="EMBL" id="BN001304">
    <property type="protein sequence ID" value="CBF78646.1"/>
    <property type="molecule type" value="Genomic_DNA"/>
</dbReference>
<dbReference type="PIR" id="S55494">
    <property type="entry name" value="S55494"/>
</dbReference>
<dbReference type="PIR" id="S57328">
    <property type="entry name" value="S57328"/>
</dbReference>
<dbReference type="RefSeq" id="XP_680578.1">
    <property type="nucleotide sequence ID" value="XM_675486.1"/>
</dbReference>
<dbReference type="SMR" id="Q02398"/>
<dbReference type="FunCoup" id="Q02398">
    <property type="interactions" value="293"/>
</dbReference>
<dbReference type="STRING" id="227321.Q02398"/>
<dbReference type="EnsemblFungi" id="CBF78646">
    <property type="protein sequence ID" value="CBF78646"/>
    <property type="gene ID" value="ANIA_07309"/>
</dbReference>
<dbReference type="VEuPathDB" id="FungiDB:AN7309"/>
<dbReference type="eggNOG" id="KOG0287">
    <property type="taxonomic scope" value="Eukaryota"/>
</dbReference>
<dbReference type="HOGENOM" id="CLU_028491_1_1_1"/>
<dbReference type="InParanoid" id="Q02398"/>
<dbReference type="OMA" id="IPNTGPR"/>
<dbReference type="OrthoDB" id="9049620at2759"/>
<dbReference type="UniPathway" id="UPA00143"/>
<dbReference type="Proteomes" id="UP000000560">
    <property type="component" value="Chromosome IV"/>
</dbReference>
<dbReference type="GO" id="GO:0005634">
    <property type="term" value="C:nucleus"/>
    <property type="evidence" value="ECO:0000318"/>
    <property type="project" value="GO_Central"/>
</dbReference>
<dbReference type="GO" id="GO:0097505">
    <property type="term" value="C:Rad6-Rad18 complex"/>
    <property type="evidence" value="ECO:0000318"/>
    <property type="project" value="GO_Central"/>
</dbReference>
<dbReference type="GO" id="GO:0003697">
    <property type="term" value="F:single-stranded DNA binding"/>
    <property type="evidence" value="ECO:0007669"/>
    <property type="project" value="InterPro"/>
</dbReference>
<dbReference type="GO" id="GO:0061630">
    <property type="term" value="F:ubiquitin protein ligase activity"/>
    <property type="evidence" value="ECO:0007669"/>
    <property type="project" value="InterPro"/>
</dbReference>
<dbReference type="GO" id="GO:0008270">
    <property type="term" value="F:zinc ion binding"/>
    <property type="evidence" value="ECO:0007669"/>
    <property type="project" value="UniProtKB-KW"/>
</dbReference>
<dbReference type="GO" id="GO:0006281">
    <property type="term" value="P:DNA repair"/>
    <property type="evidence" value="ECO:0000315"/>
    <property type="project" value="AspGD"/>
</dbReference>
<dbReference type="GO" id="GO:0006312">
    <property type="term" value="P:mitotic recombination"/>
    <property type="evidence" value="ECO:0000315"/>
    <property type="project" value="AspGD"/>
</dbReference>
<dbReference type="GO" id="GO:0006301">
    <property type="term" value="P:postreplication repair"/>
    <property type="evidence" value="ECO:0000318"/>
    <property type="project" value="GO_Central"/>
</dbReference>
<dbReference type="GO" id="GO:0006513">
    <property type="term" value="P:protein monoubiquitination"/>
    <property type="evidence" value="ECO:0000318"/>
    <property type="project" value="GO_Central"/>
</dbReference>
<dbReference type="FunFam" id="3.30.40.10:FF:000172">
    <property type="entry name" value="E3 ubiquitin-protein ligase RAD18"/>
    <property type="match status" value="1"/>
</dbReference>
<dbReference type="Gene3D" id="3.30.160.60">
    <property type="entry name" value="Classic Zinc Finger"/>
    <property type="match status" value="1"/>
</dbReference>
<dbReference type="Gene3D" id="3.30.40.10">
    <property type="entry name" value="Zinc/RING finger domain, C3HC4 (zinc finger)"/>
    <property type="match status" value="1"/>
</dbReference>
<dbReference type="InterPro" id="IPR039577">
    <property type="entry name" value="Rad18"/>
</dbReference>
<dbReference type="InterPro" id="IPR004580">
    <property type="entry name" value="Rad18_fungi"/>
</dbReference>
<dbReference type="InterPro" id="IPR006642">
    <property type="entry name" value="Rad18_UBZ4"/>
</dbReference>
<dbReference type="InterPro" id="IPR003034">
    <property type="entry name" value="SAP_dom"/>
</dbReference>
<dbReference type="InterPro" id="IPR001841">
    <property type="entry name" value="Znf_RING"/>
</dbReference>
<dbReference type="InterPro" id="IPR013083">
    <property type="entry name" value="Znf_RING/FYVE/PHD"/>
</dbReference>
<dbReference type="InterPro" id="IPR017907">
    <property type="entry name" value="Znf_RING_CS"/>
</dbReference>
<dbReference type="NCBIfam" id="TIGR00599">
    <property type="entry name" value="rad18"/>
    <property type="match status" value="1"/>
</dbReference>
<dbReference type="PANTHER" id="PTHR14134">
    <property type="entry name" value="E3 UBIQUITIN-PROTEIN LIGASE RAD18"/>
    <property type="match status" value="1"/>
</dbReference>
<dbReference type="PANTHER" id="PTHR14134:SF2">
    <property type="entry name" value="E3 UBIQUITIN-PROTEIN LIGASE RAD18"/>
    <property type="match status" value="1"/>
</dbReference>
<dbReference type="Pfam" id="PF02037">
    <property type="entry name" value="SAP"/>
    <property type="match status" value="1"/>
</dbReference>
<dbReference type="Pfam" id="PF13923">
    <property type="entry name" value="zf-C3HC4_2"/>
    <property type="match status" value="1"/>
</dbReference>
<dbReference type="SMART" id="SM00184">
    <property type="entry name" value="RING"/>
    <property type="match status" value="1"/>
</dbReference>
<dbReference type="SMART" id="SM00513">
    <property type="entry name" value="SAP"/>
    <property type="match status" value="1"/>
</dbReference>
<dbReference type="SMART" id="SM00734">
    <property type="entry name" value="ZnF_Rad18"/>
    <property type="match status" value="1"/>
</dbReference>
<dbReference type="SUPFAM" id="SSF57850">
    <property type="entry name" value="RING/U-box"/>
    <property type="match status" value="1"/>
</dbReference>
<dbReference type="PROSITE" id="PS50800">
    <property type="entry name" value="SAP"/>
    <property type="match status" value="1"/>
</dbReference>
<dbReference type="PROSITE" id="PS00518">
    <property type="entry name" value="ZF_RING_1"/>
    <property type="match status" value="1"/>
</dbReference>
<dbReference type="PROSITE" id="PS50089">
    <property type="entry name" value="ZF_RING_2"/>
    <property type="match status" value="1"/>
</dbReference>
<dbReference type="PROSITE" id="PS51908">
    <property type="entry name" value="ZF_UBZ4"/>
    <property type="match status" value="1"/>
</dbReference>